<gene>
    <name evidence="1" type="primary">xseB</name>
    <name type="ordered locus">MMAR_4358</name>
</gene>
<dbReference type="EC" id="3.1.11.6" evidence="1"/>
<dbReference type="EMBL" id="CP000854">
    <property type="protein sequence ID" value="ACC42765.1"/>
    <property type="molecule type" value="Genomic_DNA"/>
</dbReference>
<dbReference type="RefSeq" id="WP_012395921.1">
    <property type="nucleotide sequence ID" value="NC_010612.1"/>
</dbReference>
<dbReference type="SMR" id="B2HT44"/>
<dbReference type="STRING" id="216594.MMAR_4358"/>
<dbReference type="GeneID" id="93435704"/>
<dbReference type="KEGG" id="mmi:MMAR_4358"/>
<dbReference type="eggNOG" id="COG1722">
    <property type="taxonomic scope" value="Bacteria"/>
</dbReference>
<dbReference type="HOGENOM" id="CLU_145918_0_2_11"/>
<dbReference type="OrthoDB" id="5244334at2"/>
<dbReference type="Proteomes" id="UP000001190">
    <property type="component" value="Chromosome"/>
</dbReference>
<dbReference type="GO" id="GO:0005829">
    <property type="term" value="C:cytosol"/>
    <property type="evidence" value="ECO:0007669"/>
    <property type="project" value="TreeGrafter"/>
</dbReference>
<dbReference type="GO" id="GO:0009318">
    <property type="term" value="C:exodeoxyribonuclease VII complex"/>
    <property type="evidence" value="ECO:0007669"/>
    <property type="project" value="InterPro"/>
</dbReference>
<dbReference type="GO" id="GO:0008855">
    <property type="term" value="F:exodeoxyribonuclease VII activity"/>
    <property type="evidence" value="ECO:0007669"/>
    <property type="project" value="UniProtKB-UniRule"/>
</dbReference>
<dbReference type="GO" id="GO:0006308">
    <property type="term" value="P:DNA catabolic process"/>
    <property type="evidence" value="ECO:0007669"/>
    <property type="project" value="UniProtKB-UniRule"/>
</dbReference>
<dbReference type="FunFam" id="1.10.287.1040:FF:000004">
    <property type="entry name" value="Exodeoxyribonuclease 7 small subunit"/>
    <property type="match status" value="1"/>
</dbReference>
<dbReference type="Gene3D" id="1.10.287.1040">
    <property type="entry name" value="Exonuclease VII, small subunit"/>
    <property type="match status" value="1"/>
</dbReference>
<dbReference type="HAMAP" id="MF_00337">
    <property type="entry name" value="Exonuc_7_S"/>
    <property type="match status" value="1"/>
</dbReference>
<dbReference type="InterPro" id="IPR003761">
    <property type="entry name" value="Exonuc_VII_S"/>
</dbReference>
<dbReference type="InterPro" id="IPR037004">
    <property type="entry name" value="Exonuc_VII_ssu_sf"/>
</dbReference>
<dbReference type="NCBIfam" id="NF002139">
    <property type="entry name" value="PRK00977.1-3"/>
    <property type="match status" value="1"/>
</dbReference>
<dbReference type="NCBIfam" id="TIGR01280">
    <property type="entry name" value="xseB"/>
    <property type="match status" value="1"/>
</dbReference>
<dbReference type="PANTHER" id="PTHR34137">
    <property type="entry name" value="EXODEOXYRIBONUCLEASE 7 SMALL SUBUNIT"/>
    <property type="match status" value="1"/>
</dbReference>
<dbReference type="PANTHER" id="PTHR34137:SF1">
    <property type="entry name" value="EXODEOXYRIBONUCLEASE 7 SMALL SUBUNIT"/>
    <property type="match status" value="1"/>
</dbReference>
<dbReference type="Pfam" id="PF02609">
    <property type="entry name" value="Exonuc_VII_S"/>
    <property type="match status" value="1"/>
</dbReference>
<dbReference type="PIRSF" id="PIRSF006488">
    <property type="entry name" value="Exonuc_VII_S"/>
    <property type="match status" value="1"/>
</dbReference>
<dbReference type="SUPFAM" id="SSF116842">
    <property type="entry name" value="XseB-like"/>
    <property type="match status" value="1"/>
</dbReference>
<proteinExistence type="inferred from homology"/>
<accession>B2HT44</accession>
<keyword id="KW-0963">Cytoplasm</keyword>
<keyword id="KW-0269">Exonuclease</keyword>
<keyword id="KW-0378">Hydrolase</keyword>
<keyword id="KW-0540">Nuclease</keyword>
<keyword id="KW-1185">Reference proteome</keyword>
<organism>
    <name type="scientific">Mycobacterium marinum (strain ATCC BAA-535 / M)</name>
    <dbReference type="NCBI Taxonomy" id="216594"/>
    <lineage>
        <taxon>Bacteria</taxon>
        <taxon>Bacillati</taxon>
        <taxon>Actinomycetota</taxon>
        <taxon>Actinomycetes</taxon>
        <taxon>Mycobacteriales</taxon>
        <taxon>Mycobacteriaceae</taxon>
        <taxon>Mycobacterium</taxon>
        <taxon>Mycobacterium ulcerans group</taxon>
    </lineage>
</organism>
<comment type="function">
    <text evidence="1">Bidirectionally degrades single-stranded DNA into large acid-insoluble oligonucleotides, which are then degraded further into small acid-soluble oligonucleotides.</text>
</comment>
<comment type="catalytic activity">
    <reaction evidence="1">
        <text>Exonucleolytic cleavage in either 5'- to 3'- or 3'- to 5'-direction to yield nucleoside 5'-phosphates.</text>
        <dbReference type="EC" id="3.1.11.6"/>
    </reaction>
</comment>
<comment type="subunit">
    <text evidence="1">Heterooligomer composed of large and small subunits.</text>
</comment>
<comment type="subcellular location">
    <subcellularLocation>
        <location evidence="1">Cytoplasm</location>
    </subcellularLocation>
</comment>
<comment type="similarity">
    <text evidence="1">Belongs to the XseB family.</text>
</comment>
<reference key="1">
    <citation type="journal article" date="2008" name="Genome Res.">
        <title>Insights from the complete genome sequence of Mycobacterium marinum on the evolution of Mycobacterium tuberculosis.</title>
        <authorList>
            <person name="Stinear T.P."/>
            <person name="Seemann T."/>
            <person name="Harrison P.F."/>
            <person name="Jenkin G.A."/>
            <person name="Davies J.K."/>
            <person name="Johnson P.D."/>
            <person name="Abdellah Z."/>
            <person name="Arrowsmith C."/>
            <person name="Chillingworth T."/>
            <person name="Churcher C."/>
            <person name="Clarke K."/>
            <person name="Cronin A."/>
            <person name="Davis P."/>
            <person name="Goodhead I."/>
            <person name="Holroyd N."/>
            <person name="Jagels K."/>
            <person name="Lord A."/>
            <person name="Moule S."/>
            <person name="Mungall K."/>
            <person name="Norbertczak H."/>
            <person name="Quail M.A."/>
            <person name="Rabbinowitsch E."/>
            <person name="Walker D."/>
            <person name="White B."/>
            <person name="Whitehead S."/>
            <person name="Small P.L."/>
            <person name="Brosch R."/>
            <person name="Ramakrishnan L."/>
            <person name="Fischbach M.A."/>
            <person name="Parkhill J."/>
            <person name="Cole S.T."/>
        </authorList>
    </citation>
    <scope>NUCLEOTIDE SEQUENCE [LARGE SCALE GENOMIC DNA]</scope>
    <source>
        <strain>ATCC BAA-535 / M</strain>
    </source>
</reference>
<sequence>MELDDHNGETDSVTPISQLGYEACRDELIEVVRLLEQGGLDLDTSLKLWERGEVLAKRCEEHLAGARQRVADALAASEAEQD</sequence>
<name>EX7S_MYCMM</name>
<evidence type="ECO:0000255" key="1">
    <source>
        <dbReference type="HAMAP-Rule" id="MF_00337"/>
    </source>
</evidence>
<feature type="chain" id="PRO_1000119940" description="Exodeoxyribonuclease 7 small subunit">
    <location>
        <begin position="1"/>
        <end position="82"/>
    </location>
</feature>
<protein>
    <recommendedName>
        <fullName evidence="1">Exodeoxyribonuclease 7 small subunit</fullName>
        <ecNumber evidence="1">3.1.11.6</ecNumber>
    </recommendedName>
    <alternativeName>
        <fullName evidence="1">Exodeoxyribonuclease VII small subunit</fullName>
        <shortName evidence="1">Exonuclease VII small subunit</shortName>
    </alternativeName>
</protein>